<dbReference type="EMBL" id="AB015194">
    <property type="protein sequence ID" value="BAA32443.1"/>
    <property type="molecule type" value="mRNA"/>
</dbReference>
<dbReference type="EMBL" id="AF531097">
    <property type="protein sequence ID" value="AAQ10014.1"/>
    <property type="molecule type" value="mRNA"/>
</dbReference>
<dbReference type="RefSeq" id="NP_075411.2">
    <property type="nucleotide sequence ID" value="NM_023022.2"/>
</dbReference>
<dbReference type="SMR" id="Q7TNK7"/>
<dbReference type="FunCoup" id="Q7TNK7">
    <property type="interactions" value="11"/>
</dbReference>
<dbReference type="STRING" id="10116.ENSRNOP00000065437"/>
<dbReference type="GlyCosmos" id="Q7TNK7">
    <property type="glycosylation" value="4 sites, No reported glycans"/>
</dbReference>
<dbReference type="GlyGen" id="Q7TNK7">
    <property type="glycosylation" value="4 sites"/>
</dbReference>
<dbReference type="iPTMnet" id="Q7TNK7"/>
<dbReference type="PhosphoSitePlus" id="Q7TNK7"/>
<dbReference type="PaxDb" id="10116-ENSRNOP00000065437"/>
<dbReference type="GeneID" id="65207"/>
<dbReference type="KEGG" id="rno:65207"/>
<dbReference type="UCSC" id="RGD:61871">
    <property type="organism name" value="rat"/>
</dbReference>
<dbReference type="AGR" id="RGD:61871"/>
<dbReference type="CTD" id="6005"/>
<dbReference type="RGD" id="61871">
    <property type="gene designation" value="Rhag"/>
</dbReference>
<dbReference type="eggNOG" id="KOG3796">
    <property type="taxonomic scope" value="Eukaryota"/>
</dbReference>
<dbReference type="InParanoid" id="Q7TNK7"/>
<dbReference type="OrthoDB" id="51121at9989"/>
<dbReference type="PhylomeDB" id="Q7TNK7"/>
<dbReference type="Reactome" id="R-RNO-1237044">
    <property type="pathway name" value="Erythrocytes take up carbon dioxide and release oxygen"/>
</dbReference>
<dbReference type="Reactome" id="R-RNO-1247673">
    <property type="pathway name" value="Erythrocytes take up oxygen and release carbon dioxide"/>
</dbReference>
<dbReference type="Reactome" id="R-RNO-444411">
    <property type="pathway name" value="Rhesus glycoproteins mediate ammonium transport"/>
</dbReference>
<dbReference type="PRO" id="PR:Q7TNK7"/>
<dbReference type="Proteomes" id="UP000002494">
    <property type="component" value="Unplaced"/>
</dbReference>
<dbReference type="GO" id="GO:0170014">
    <property type="term" value="C:ankyrin-1 complex"/>
    <property type="evidence" value="ECO:0000266"/>
    <property type="project" value="RGD"/>
</dbReference>
<dbReference type="GO" id="GO:0016020">
    <property type="term" value="C:membrane"/>
    <property type="evidence" value="ECO:0000250"/>
    <property type="project" value="UniProtKB"/>
</dbReference>
<dbReference type="GO" id="GO:0005886">
    <property type="term" value="C:plasma membrane"/>
    <property type="evidence" value="ECO:0000250"/>
    <property type="project" value="UniProtKB"/>
</dbReference>
<dbReference type="GO" id="GO:0008519">
    <property type="term" value="F:ammonium channel activity"/>
    <property type="evidence" value="ECO:0000250"/>
    <property type="project" value="UniProtKB"/>
</dbReference>
<dbReference type="GO" id="GO:0030506">
    <property type="term" value="F:ankyrin binding"/>
    <property type="evidence" value="ECO:0000266"/>
    <property type="project" value="RGD"/>
</dbReference>
<dbReference type="GO" id="GO:0035379">
    <property type="term" value="F:carbon dioxide transmembrane transporter activity"/>
    <property type="evidence" value="ECO:0000250"/>
    <property type="project" value="UniProtKB"/>
</dbReference>
<dbReference type="GO" id="GO:0022840">
    <property type="term" value="F:leak channel activity"/>
    <property type="evidence" value="ECO:0000250"/>
    <property type="project" value="UniProtKB"/>
</dbReference>
<dbReference type="GO" id="GO:0015200">
    <property type="term" value="F:methylammonium transmembrane transporter activity"/>
    <property type="evidence" value="ECO:0000250"/>
    <property type="project" value="UniProtKB"/>
</dbReference>
<dbReference type="GO" id="GO:0097272">
    <property type="term" value="P:ammonium homeostasis"/>
    <property type="evidence" value="ECO:0000318"/>
    <property type="project" value="GO_Central"/>
</dbReference>
<dbReference type="GO" id="GO:0072488">
    <property type="term" value="P:ammonium transmembrane transport"/>
    <property type="evidence" value="ECO:0000250"/>
    <property type="project" value="UniProtKB"/>
</dbReference>
<dbReference type="GO" id="GO:0035378">
    <property type="term" value="P:carbon dioxide transmembrane transport"/>
    <property type="evidence" value="ECO:0000250"/>
    <property type="project" value="UniProtKB"/>
</dbReference>
<dbReference type="GO" id="GO:0015670">
    <property type="term" value="P:carbon dioxide transport"/>
    <property type="evidence" value="ECO:0000250"/>
    <property type="project" value="UniProtKB"/>
</dbReference>
<dbReference type="GO" id="GO:0048821">
    <property type="term" value="P:erythrocyte development"/>
    <property type="evidence" value="ECO:0000266"/>
    <property type="project" value="RGD"/>
</dbReference>
<dbReference type="GO" id="GO:0098662">
    <property type="term" value="P:inorganic cation transmembrane transport"/>
    <property type="evidence" value="ECO:0000250"/>
    <property type="project" value="UniProtKB"/>
</dbReference>
<dbReference type="GO" id="GO:0006873">
    <property type="term" value="P:intracellular monoatomic ion homeostasis"/>
    <property type="evidence" value="ECO:0000250"/>
    <property type="project" value="UniProtKB"/>
</dbReference>
<dbReference type="GO" id="GO:0072489">
    <property type="term" value="P:methylammonium transmembrane transport"/>
    <property type="evidence" value="ECO:0000250"/>
    <property type="project" value="UniProtKB"/>
</dbReference>
<dbReference type="GO" id="GO:0060586">
    <property type="term" value="P:multicellular organismal-level iron ion homeostasis"/>
    <property type="evidence" value="ECO:0000266"/>
    <property type="project" value="RGD"/>
</dbReference>
<dbReference type="FunFam" id="1.10.3430.10:FF:000001">
    <property type="entry name" value="Ammonium transporter Rh type C"/>
    <property type="match status" value="1"/>
</dbReference>
<dbReference type="Gene3D" id="1.10.3430.10">
    <property type="entry name" value="Ammonium transporter AmtB like domains"/>
    <property type="match status" value="1"/>
</dbReference>
<dbReference type="InterPro" id="IPR029020">
    <property type="entry name" value="Ammonium/urea_transptr"/>
</dbReference>
<dbReference type="InterPro" id="IPR024041">
    <property type="entry name" value="NH4_transpt_AmtB-like_dom"/>
</dbReference>
<dbReference type="InterPro" id="IPR002229">
    <property type="entry name" value="RhesusRHD"/>
</dbReference>
<dbReference type="PANTHER" id="PTHR11730">
    <property type="entry name" value="AMMONIUM TRANSPORTER"/>
    <property type="match status" value="1"/>
</dbReference>
<dbReference type="PANTHER" id="PTHR11730:SF32">
    <property type="entry name" value="AMMONIUM TRANSPORTER RH TYPE A"/>
    <property type="match status" value="1"/>
</dbReference>
<dbReference type="Pfam" id="PF00909">
    <property type="entry name" value="Ammonium_transp"/>
    <property type="match status" value="1"/>
</dbReference>
<dbReference type="PRINTS" id="PR00342">
    <property type="entry name" value="RHESUSRHD"/>
</dbReference>
<dbReference type="SUPFAM" id="SSF111352">
    <property type="entry name" value="Ammonium transporter"/>
    <property type="match status" value="1"/>
</dbReference>
<reference key="1">
    <citation type="journal article" date="1998" name="Biochem. Biophys. Res. Commun.">
        <title>Conserved evolution of the Rh50 gene compared to its homologous Rh blood group gene.</title>
        <authorList>
            <person name="Kitano T."/>
            <person name="Sumiyama K."/>
            <person name="Shiroishi T."/>
            <person name="Saitou N."/>
        </authorList>
    </citation>
    <scope>NUCLEOTIDE SEQUENCE [MRNA]</scope>
    <source>
        <tissue>Bone marrow</tissue>
    </source>
</reference>
<reference key="2">
    <citation type="journal article" date="2005" name="Proc. Natl. Acad. Sci. U.S.A.">
        <title>Evolutionary conservation and diversification of Rh family genes and proteins.</title>
        <authorList>
            <person name="Huang C.-H."/>
            <person name="Peng J."/>
        </authorList>
    </citation>
    <scope>NUCLEOTIDE SEQUENCE [MRNA]</scope>
    <source>
        <tissue>Blood</tissue>
    </source>
</reference>
<reference key="3">
    <citation type="journal article" date="2006" name="Proc. Natl. Acad. Sci. U.S.A.">
        <title>Quantitative phosphoproteomics of vasopressin-sensitive renal cells: regulation of aquaporin-2 phosphorylation at two sites.</title>
        <authorList>
            <person name="Hoffert J.D."/>
            <person name="Pisitkun T."/>
            <person name="Wang G."/>
            <person name="Shen R.-F."/>
            <person name="Knepper M.A."/>
        </authorList>
    </citation>
    <scope>IDENTIFICATION BY MASS SPECTROMETRY [LARGE SCALE ANALYSIS]</scope>
</reference>
<keyword id="KW-0924">Ammonia transport</keyword>
<keyword id="KW-0325">Glycoprotein</keyword>
<keyword id="KW-0472">Membrane</keyword>
<keyword id="KW-1185">Reference proteome</keyword>
<keyword id="KW-0812">Transmembrane</keyword>
<keyword id="KW-1133">Transmembrane helix</keyword>
<keyword id="KW-0813">Transport</keyword>
<evidence type="ECO:0000250" key="1">
    <source>
        <dbReference type="UniProtKB" id="Q02094"/>
    </source>
</evidence>
<evidence type="ECO:0000255" key="2"/>
<evidence type="ECO:0000256" key="3">
    <source>
        <dbReference type="SAM" id="MobiDB-lite"/>
    </source>
</evidence>
<evidence type="ECO:0000305" key="4"/>
<evidence type="ECO:0000312" key="5">
    <source>
        <dbReference type="RGD" id="61871"/>
    </source>
</evidence>
<organism>
    <name type="scientific">Rattus norvegicus</name>
    <name type="common">Rat</name>
    <dbReference type="NCBI Taxonomy" id="10116"/>
    <lineage>
        <taxon>Eukaryota</taxon>
        <taxon>Metazoa</taxon>
        <taxon>Chordata</taxon>
        <taxon>Craniata</taxon>
        <taxon>Vertebrata</taxon>
        <taxon>Euteleostomi</taxon>
        <taxon>Mammalia</taxon>
        <taxon>Eutheria</taxon>
        <taxon>Euarchontoglires</taxon>
        <taxon>Glires</taxon>
        <taxon>Rodentia</taxon>
        <taxon>Myomorpha</taxon>
        <taxon>Muroidea</taxon>
        <taxon>Muridae</taxon>
        <taxon>Murinae</taxon>
        <taxon>Rattus</taxon>
    </lineage>
</organism>
<sequence length="450" mass="49062">MRFKFSLIALSLEVVMIVSFALFVEYETSQNGSQKSASQQNASQQNAAAQQNASQQGNASSPAKEDQFFQLYPLFQHVHVMIFVGFGFLMTFLKKYGFSGVGFNLFLAALGLQWGTIVQGLLHSHGLKFPFRIKNMINADFSTATVLISFGAVLGKTSPIQMIIMTILEIAVFAGNEHLVTEIFKASDTGASMTIHAFGAYFGLAVAGVLYRSGLKHGHPNEESVYHSDLFAMIGTLFLWMFWPSFNSAIAQPENNQYRAIVNTYMSLAACVITAYALSSLVERRGRLDMVHIQNATLAGGVAVGTCADMEIPLYFAMTIGSIAGIISVLGYKFLSPLLAHKLMIHDTCGVHNLHGLPGVFGGLASIVAISWGKSTVSTMAMQATALGSSIGSAIVGGLVTGLILKLPVWNQPPDEYCFDDSVSWKVPKYRELDNYFFQHVTHNHVEHEV</sequence>
<feature type="chain" id="PRO_0000380191" description="Ammonium transporter Rh type A">
    <location>
        <begin position="1"/>
        <end position="450"/>
    </location>
</feature>
<feature type="topological domain" description="Cytoplasmic" evidence="2">
    <location>
        <begin position="1"/>
        <end position="4"/>
    </location>
</feature>
<feature type="transmembrane region" description="Helical" evidence="2">
    <location>
        <begin position="5"/>
        <end position="25"/>
    </location>
</feature>
<feature type="topological domain" description="Extracellular" evidence="2">
    <location>
        <begin position="26"/>
        <end position="72"/>
    </location>
</feature>
<feature type="transmembrane region" description="Helical" evidence="2">
    <location>
        <begin position="73"/>
        <end position="93"/>
    </location>
</feature>
<feature type="topological domain" description="Cytoplasmic" evidence="2">
    <location>
        <begin position="94"/>
        <end position="97"/>
    </location>
</feature>
<feature type="transmembrane region" description="Helical" evidence="2">
    <location>
        <begin position="98"/>
        <end position="118"/>
    </location>
</feature>
<feature type="topological domain" description="Extracellular" evidence="2">
    <location>
        <begin position="119"/>
        <end position="134"/>
    </location>
</feature>
<feature type="transmembrane region" description="Helical" evidence="2">
    <location>
        <begin position="135"/>
        <end position="155"/>
    </location>
</feature>
<feature type="topological domain" description="Cytoplasmic" evidence="2">
    <location>
        <begin position="156"/>
        <end position="159"/>
    </location>
</feature>
<feature type="transmembrane region" description="Helical" evidence="2">
    <location>
        <begin position="160"/>
        <end position="180"/>
    </location>
</feature>
<feature type="topological domain" description="Extracellular" evidence="2">
    <location>
        <begin position="181"/>
        <end position="189"/>
    </location>
</feature>
<feature type="transmembrane region" description="Helical" evidence="2">
    <location>
        <begin position="190"/>
        <end position="210"/>
    </location>
</feature>
<feature type="topological domain" description="Cytoplasmic" evidence="2">
    <location>
        <begin position="211"/>
        <end position="229"/>
    </location>
</feature>
<feature type="transmembrane region" description="Helical" evidence="2">
    <location>
        <begin position="230"/>
        <end position="250"/>
    </location>
</feature>
<feature type="topological domain" description="Extracellular" evidence="2">
    <location>
        <begin position="251"/>
        <end position="260"/>
    </location>
</feature>
<feature type="transmembrane region" description="Helical" evidence="2">
    <location>
        <begin position="261"/>
        <end position="281"/>
    </location>
</feature>
<feature type="topological domain" description="Cytoplasmic" evidence="2">
    <location>
        <begin position="282"/>
        <end position="289"/>
    </location>
</feature>
<feature type="transmembrane region" description="Helical" evidence="2">
    <location>
        <begin position="290"/>
        <end position="307"/>
    </location>
</feature>
<feature type="topological domain" description="Extracellular" evidence="2">
    <location>
        <begin position="308"/>
        <end position="311"/>
    </location>
</feature>
<feature type="transmembrane region" description="Helical" evidence="2">
    <location>
        <begin position="312"/>
        <end position="332"/>
    </location>
</feature>
<feature type="topological domain" description="Cytoplasmic" evidence="2">
    <location>
        <begin position="333"/>
        <end position="349"/>
    </location>
</feature>
<feature type="transmembrane region" description="Helical" evidence="2">
    <location>
        <begin position="350"/>
        <end position="370"/>
    </location>
</feature>
<feature type="topological domain" description="Extracellular" evidence="2">
    <location>
        <begin position="371"/>
        <end position="384"/>
    </location>
</feature>
<feature type="transmembrane region" description="Helical" evidence="2">
    <location>
        <begin position="385"/>
        <end position="405"/>
    </location>
</feature>
<feature type="topological domain" description="Cytoplasmic" evidence="2">
    <location>
        <begin position="406"/>
        <end position="450"/>
    </location>
</feature>
<feature type="region of interest" description="Disordered" evidence="3">
    <location>
        <begin position="34"/>
        <end position="61"/>
    </location>
</feature>
<feature type="glycosylation site" description="N-linked (GlcNAc...) asparagine" evidence="2">
    <location>
        <position position="31"/>
    </location>
</feature>
<feature type="glycosylation site" description="N-linked (GlcNAc...) asparagine" evidence="2">
    <location>
        <position position="41"/>
    </location>
</feature>
<feature type="glycosylation site" description="N-linked (GlcNAc...) asparagine" evidence="2">
    <location>
        <position position="52"/>
    </location>
</feature>
<feature type="glycosylation site" description="N-linked (GlcNAc...) asparagine" evidence="2">
    <location>
        <position position="58"/>
    </location>
</feature>
<feature type="sequence conflict" description="In Ref. 1; BAA32443." evidence="4" ref="1">
    <original>S</original>
    <variation>P</variation>
    <location>
        <position position="38"/>
    </location>
</feature>
<feature type="sequence conflict" description="In Ref. 1; BAA32443." evidence="4" ref="1">
    <original>G</original>
    <variation>S</variation>
    <location>
        <position position="301"/>
    </location>
</feature>
<proteinExistence type="evidence at protein level"/>
<comment type="function">
    <text evidence="1">Component of the ankyrin-1 complex, a multiprotein complex involved in the stability and shape of the erythrocyte membrane. Heterotrimer with RHCE (RHAG)2(RHCE), that transports ammonium and its related derivative methylammonium, in both neutral and ionic forms, across the erythrocyte membrane. The transport of NH4(+) is electrogenic and masks the NH3 transport. Also, may act as a CO2 channel. Moreover in erythrocyte, regulates RHD membrane expression and is associated with rhesus blood group antigen expression.</text>
</comment>
<comment type="catalytic activity">
    <reaction evidence="1">
        <text>methylamine(out) = methylamine(in)</text>
        <dbReference type="Rhea" id="RHEA:74391"/>
        <dbReference type="ChEBI" id="CHEBI:59338"/>
    </reaction>
</comment>
<comment type="catalytic activity">
    <reaction evidence="1">
        <text>NH4(+)(in) = NH4(+)(out)</text>
        <dbReference type="Rhea" id="RHEA:28747"/>
        <dbReference type="ChEBI" id="CHEBI:28938"/>
    </reaction>
</comment>
<comment type="catalytic activity">
    <reaction evidence="1">
        <text>CO2(out) = CO2(in)</text>
        <dbReference type="Rhea" id="RHEA:74891"/>
        <dbReference type="ChEBI" id="CHEBI:16526"/>
    </reaction>
</comment>
<comment type="subunit">
    <text evidence="1">Homodimer. Heterotrimer; a RHCE monomer interacts with a RHAG homodimer. Component of the ankyrin-1 complex in the erythrocyte, composed of ANK1, RHCE, RHAG, SLC4A1, EPB42, GYPA, GYPB and AQP1. Interacts with GYPB (via the N-terminal); this interaction bridges the (RHAG)2(RHCE) heterotrimer with the SLC4A1 Band 3 I dimer complexed with GYPA.</text>
</comment>
<comment type="subcellular location">
    <subcellularLocation>
        <location evidence="1">Membrane</location>
        <topology evidence="1">Multi-pass membrane protein</topology>
    </subcellularLocation>
    <text evidence="1">Localization at the plasma membrane is regulated by ANK1.</text>
</comment>
<comment type="PTM">
    <text evidence="1">Glycosylated.</text>
</comment>
<comment type="similarity">
    <text evidence="4">Belongs to the ammonium transporter (TC 2.A.49) family. Rh subfamily.</text>
</comment>
<accession>Q7TNK7</accession>
<accession>O88300</accession>
<protein>
    <recommendedName>
        <fullName evidence="4">Ammonium transporter Rh type A</fullName>
    </recommendedName>
    <alternativeName>
        <fullName>Erythrocyte membrane glycoprotein Rh50</fullName>
    </alternativeName>
    <alternativeName>
        <fullName>Rhesus blood group family type A glycoprotein</fullName>
        <shortName>Rh family type A glycoprotein</shortName>
        <shortName>Rh type A glycoprotein</shortName>
    </alternativeName>
    <cdAntigenName>CD241</cdAntigenName>
</protein>
<gene>
    <name evidence="5" type="primary">Rhag</name>
    <name type="synonym">Rh50</name>
</gene>
<name>RHAG_RAT</name>